<protein>
    <recommendedName>
        <fullName evidence="2">Translation initiation factor IF-2</fullName>
    </recommendedName>
</protein>
<dbReference type="EMBL" id="CP000544">
    <property type="protein sequence ID" value="ABM62513.1"/>
    <property type="molecule type" value="Genomic_DNA"/>
</dbReference>
<dbReference type="RefSeq" id="WP_011814535.1">
    <property type="nucleotide sequence ID" value="NC_008789.1"/>
</dbReference>
<dbReference type="SMR" id="A1WXV1"/>
<dbReference type="STRING" id="349124.Hhal_1749"/>
<dbReference type="KEGG" id="hha:Hhal_1749"/>
<dbReference type="eggNOG" id="COG0532">
    <property type="taxonomic scope" value="Bacteria"/>
</dbReference>
<dbReference type="HOGENOM" id="CLU_006301_6_1_6"/>
<dbReference type="OrthoDB" id="9811804at2"/>
<dbReference type="Proteomes" id="UP000000647">
    <property type="component" value="Chromosome"/>
</dbReference>
<dbReference type="GO" id="GO:0005829">
    <property type="term" value="C:cytosol"/>
    <property type="evidence" value="ECO:0007669"/>
    <property type="project" value="TreeGrafter"/>
</dbReference>
<dbReference type="GO" id="GO:0005525">
    <property type="term" value="F:GTP binding"/>
    <property type="evidence" value="ECO:0007669"/>
    <property type="project" value="UniProtKB-KW"/>
</dbReference>
<dbReference type="GO" id="GO:0003924">
    <property type="term" value="F:GTPase activity"/>
    <property type="evidence" value="ECO:0007669"/>
    <property type="project" value="UniProtKB-UniRule"/>
</dbReference>
<dbReference type="GO" id="GO:0097216">
    <property type="term" value="F:guanosine tetraphosphate binding"/>
    <property type="evidence" value="ECO:0007669"/>
    <property type="project" value="UniProtKB-ARBA"/>
</dbReference>
<dbReference type="GO" id="GO:0003743">
    <property type="term" value="F:translation initiation factor activity"/>
    <property type="evidence" value="ECO:0007669"/>
    <property type="project" value="UniProtKB-UniRule"/>
</dbReference>
<dbReference type="CDD" id="cd01887">
    <property type="entry name" value="IF2_eIF5B"/>
    <property type="match status" value="1"/>
</dbReference>
<dbReference type="CDD" id="cd03702">
    <property type="entry name" value="IF2_mtIF2_II"/>
    <property type="match status" value="1"/>
</dbReference>
<dbReference type="CDD" id="cd03692">
    <property type="entry name" value="mtIF2_IVc"/>
    <property type="match status" value="1"/>
</dbReference>
<dbReference type="FunFam" id="2.40.30.10:FF:000007">
    <property type="entry name" value="Translation initiation factor IF-2"/>
    <property type="match status" value="1"/>
</dbReference>
<dbReference type="FunFam" id="2.40.30.10:FF:000008">
    <property type="entry name" value="Translation initiation factor IF-2"/>
    <property type="match status" value="1"/>
</dbReference>
<dbReference type="FunFam" id="3.40.50.10050:FF:000001">
    <property type="entry name" value="Translation initiation factor IF-2"/>
    <property type="match status" value="1"/>
</dbReference>
<dbReference type="FunFam" id="3.40.50.300:FF:000019">
    <property type="entry name" value="Translation initiation factor IF-2"/>
    <property type="match status" value="1"/>
</dbReference>
<dbReference type="Gene3D" id="3.40.50.300">
    <property type="entry name" value="P-loop containing nucleotide triphosphate hydrolases"/>
    <property type="match status" value="1"/>
</dbReference>
<dbReference type="Gene3D" id="3.30.56.50">
    <property type="entry name" value="Putative DNA-binding domain, N-terminal subdomain of bacterial translation initiation factor IF2"/>
    <property type="match status" value="1"/>
</dbReference>
<dbReference type="Gene3D" id="2.40.30.10">
    <property type="entry name" value="Translation factors"/>
    <property type="match status" value="2"/>
</dbReference>
<dbReference type="Gene3D" id="3.40.50.10050">
    <property type="entry name" value="Translation initiation factor IF- 2, domain 3"/>
    <property type="match status" value="1"/>
</dbReference>
<dbReference type="HAMAP" id="MF_00100_B">
    <property type="entry name" value="IF_2_B"/>
    <property type="match status" value="1"/>
</dbReference>
<dbReference type="InterPro" id="IPR009061">
    <property type="entry name" value="DNA-bd_dom_put_sf"/>
</dbReference>
<dbReference type="InterPro" id="IPR053905">
    <property type="entry name" value="EF-G-like_DII"/>
</dbReference>
<dbReference type="InterPro" id="IPR004161">
    <property type="entry name" value="EFTu-like_2"/>
</dbReference>
<dbReference type="InterPro" id="IPR013575">
    <property type="entry name" value="IF2_assoc_dom_bac"/>
</dbReference>
<dbReference type="InterPro" id="IPR044145">
    <property type="entry name" value="IF2_II"/>
</dbReference>
<dbReference type="InterPro" id="IPR006847">
    <property type="entry name" value="IF2_N"/>
</dbReference>
<dbReference type="InterPro" id="IPR027417">
    <property type="entry name" value="P-loop_NTPase"/>
</dbReference>
<dbReference type="InterPro" id="IPR005225">
    <property type="entry name" value="Small_GTP-bd"/>
</dbReference>
<dbReference type="InterPro" id="IPR000795">
    <property type="entry name" value="T_Tr_GTP-bd_dom"/>
</dbReference>
<dbReference type="InterPro" id="IPR000178">
    <property type="entry name" value="TF_IF2_bacterial-like"/>
</dbReference>
<dbReference type="InterPro" id="IPR015760">
    <property type="entry name" value="TIF_IF2"/>
</dbReference>
<dbReference type="InterPro" id="IPR023115">
    <property type="entry name" value="TIF_IF2_dom3"/>
</dbReference>
<dbReference type="InterPro" id="IPR036925">
    <property type="entry name" value="TIF_IF2_dom3_sf"/>
</dbReference>
<dbReference type="InterPro" id="IPR009000">
    <property type="entry name" value="Transl_B-barrel_sf"/>
</dbReference>
<dbReference type="NCBIfam" id="TIGR00487">
    <property type="entry name" value="IF-2"/>
    <property type="match status" value="1"/>
</dbReference>
<dbReference type="NCBIfam" id="TIGR00231">
    <property type="entry name" value="small_GTP"/>
    <property type="match status" value="1"/>
</dbReference>
<dbReference type="PANTHER" id="PTHR43381:SF5">
    <property type="entry name" value="TR-TYPE G DOMAIN-CONTAINING PROTEIN"/>
    <property type="match status" value="1"/>
</dbReference>
<dbReference type="PANTHER" id="PTHR43381">
    <property type="entry name" value="TRANSLATION INITIATION FACTOR IF-2-RELATED"/>
    <property type="match status" value="1"/>
</dbReference>
<dbReference type="Pfam" id="PF22042">
    <property type="entry name" value="EF-G_D2"/>
    <property type="match status" value="1"/>
</dbReference>
<dbReference type="Pfam" id="PF00009">
    <property type="entry name" value="GTP_EFTU"/>
    <property type="match status" value="1"/>
</dbReference>
<dbReference type="Pfam" id="PF03144">
    <property type="entry name" value="GTP_EFTU_D2"/>
    <property type="match status" value="1"/>
</dbReference>
<dbReference type="Pfam" id="PF11987">
    <property type="entry name" value="IF-2"/>
    <property type="match status" value="1"/>
</dbReference>
<dbReference type="Pfam" id="PF08364">
    <property type="entry name" value="IF2_assoc"/>
    <property type="match status" value="1"/>
</dbReference>
<dbReference type="Pfam" id="PF04760">
    <property type="entry name" value="IF2_N"/>
    <property type="match status" value="1"/>
</dbReference>
<dbReference type="SUPFAM" id="SSF52156">
    <property type="entry name" value="Initiation factor IF2/eIF5b, domain 3"/>
    <property type="match status" value="1"/>
</dbReference>
<dbReference type="SUPFAM" id="SSF52540">
    <property type="entry name" value="P-loop containing nucleoside triphosphate hydrolases"/>
    <property type="match status" value="1"/>
</dbReference>
<dbReference type="SUPFAM" id="SSF46955">
    <property type="entry name" value="Putative DNA-binding domain"/>
    <property type="match status" value="1"/>
</dbReference>
<dbReference type="SUPFAM" id="SSF50447">
    <property type="entry name" value="Translation proteins"/>
    <property type="match status" value="2"/>
</dbReference>
<dbReference type="PROSITE" id="PS51722">
    <property type="entry name" value="G_TR_2"/>
    <property type="match status" value="1"/>
</dbReference>
<dbReference type="PROSITE" id="PS01176">
    <property type="entry name" value="IF2"/>
    <property type="match status" value="1"/>
</dbReference>
<accession>A1WXV1</accession>
<keyword id="KW-0963">Cytoplasm</keyword>
<keyword id="KW-0342">GTP-binding</keyword>
<keyword id="KW-0396">Initiation factor</keyword>
<keyword id="KW-0547">Nucleotide-binding</keyword>
<keyword id="KW-0648">Protein biosynthesis</keyword>
<keyword id="KW-1185">Reference proteome</keyword>
<name>IF2_HALHL</name>
<feature type="chain" id="PRO_1000008251" description="Translation initiation factor IF-2">
    <location>
        <begin position="1"/>
        <end position="890"/>
    </location>
</feature>
<feature type="domain" description="tr-type G">
    <location>
        <begin position="390"/>
        <end position="559"/>
    </location>
</feature>
<feature type="region of interest" description="Disordered" evidence="3">
    <location>
        <begin position="50"/>
        <end position="304"/>
    </location>
</feature>
<feature type="region of interest" description="G1" evidence="1">
    <location>
        <begin position="399"/>
        <end position="406"/>
    </location>
</feature>
<feature type="region of interest" description="G2" evidence="1">
    <location>
        <begin position="424"/>
        <end position="428"/>
    </location>
</feature>
<feature type="region of interest" description="G3" evidence="1">
    <location>
        <begin position="445"/>
        <end position="448"/>
    </location>
</feature>
<feature type="region of interest" description="G4" evidence="1">
    <location>
        <begin position="499"/>
        <end position="502"/>
    </location>
</feature>
<feature type="region of interest" description="G5" evidence="1">
    <location>
        <begin position="535"/>
        <end position="537"/>
    </location>
</feature>
<feature type="compositionally biased region" description="Basic and acidic residues" evidence="3">
    <location>
        <begin position="112"/>
        <end position="125"/>
    </location>
</feature>
<feature type="compositionally biased region" description="Basic and acidic residues" evidence="3">
    <location>
        <begin position="136"/>
        <end position="147"/>
    </location>
</feature>
<feature type="compositionally biased region" description="Basic and acidic residues" evidence="3">
    <location>
        <begin position="217"/>
        <end position="262"/>
    </location>
</feature>
<feature type="binding site" evidence="2">
    <location>
        <begin position="399"/>
        <end position="406"/>
    </location>
    <ligand>
        <name>GTP</name>
        <dbReference type="ChEBI" id="CHEBI:37565"/>
    </ligand>
</feature>
<feature type="binding site" evidence="2">
    <location>
        <begin position="445"/>
        <end position="449"/>
    </location>
    <ligand>
        <name>GTP</name>
        <dbReference type="ChEBI" id="CHEBI:37565"/>
    </ligand>
</feature>
<feature type="binding site" evidence="2">
    <location>
        <begin position="499"/>
        <end position="502"/>
    </location>
    <ligand>
        <name>GTP</name>
        <dbReference type="ChEBI" id="CHEBI:37565"/>
    </ligand>
</feature>
<evidence type="ECO:0000250" key="1"/>
<evidence type="ECO:0000255" key="2">
    <source>
        <dbReference type="HAMAP-Rule" id="MF_00100"/>
    </source>
</evidence>
<evidence type="ECO:0000256" key="3">
    <source>
        <dbReference type="SAM" id="MobiDB-lite"/>
    </source>
</evidence>
<comment type="function">
    <text evidence="2">One of the essential components for the initiation of protein synthesis. Protects formylmethionyl-tRNA from spontaneous hydrolysis and promotes its binding to the 30S ribosomal subunits. Also involved in the hydrolysis of GTP during the formation of the 70S ribosomal complex.</text>
</comment>
<comment type="subcellular location">
    <subcellularLocation>
        <location evidence="2">Cytoplasm</location>
    </subcellularLocation>
</comment>
<comment type="similarity">
    <text evidence="2">Belongs to the TRAFAC class translation factor GTPase superfamily. Classic translation factor GTPase family. IF-2 subfamily.</text>
</comment>
<proteinExistence type="inferred from homology"/>
<gene>
    <name evidence="2" type="primary">infB</name>
    <name type="ordered locus">Hhal_1749</name>
</gene>
<organism>
    <name type="scientific">Halorhodospira halophila (strain DSM 244 / SL1)</name>
    <name type="common">Ectothiorhodospira halophila (strain DSM 244 / SL1)</name>
    <dbReference type="NCBI Taxonomy" id="349124"/>
    <lineage>
        <taxon>Bacteria</taxon>
        <taxon>Pseudomonadati</taxon>
        <taxon>Pseudomonadota</taxon>
        <taxon>Gammaproteobacteria</taxon>
        <taxon>Chromatiales</taxon>
        <taxon>Ectothiorhodospiraceae</taxon>
        <taxon>Halorhodospira</taxon>
    </lineage>
</organism>
<reference key="1">
    <citation type="submission" date="2006-12" db="EMBL/GenBank/DDBJ databases">
        <title>Complete sequence of Halorhodospira halophila SL1.</title>
        <authorList>
            <consortium name="US DOE Joint Genome Institute"/>
            <person name="Copeland A."/>
            <person name="Lucas S."/>
            <person name="Lapidus A."/>
            <person name="Barry K."/>
            <person name="Detter J.C."/>
            <person name="Glavina del Rio T."/>
            <person name="Hammon N."/>
            <person name="Israni S."/>
            <person name="Dalin E."/>
            <person name="Tice H."/>
            <person name="Pitluck S."/>
            <person name="Saunders E."/>
            <person name="Brettin T."/>
            <person name="Bruce D."/>
            <person name="Han C."/>
            <person name="Tapia R."/>
            <person name="Schmutz J."/>
            <person name="Larimer F."/>
            <person name="Land M."/>
            <person name="Hauser L."/>
            <person name="Kyrpides N."/>
            <person name="Mikhailova N."/>
            <person name="Hoff W."/>
            <person name="Richardson P."/>
        </authorList>
    </citation>
    <scope>NUCLEOTIDE SEQUENCE [LARGE SCALE GENOMIC DNA]</scope>
    <source>
        <strain>DSM 244 / SL1</strain>
    </source>
</reference>
<sequence>MAETTVKEFAQTVGIPVERLQAQLEAAGLGRRDDGAALSAEDKATLLAHLRQGSPEQEEEGGGSDGSPKKITLKRRSHSQLKMPAGRDAGSRGPRQTRTVNVEVRKRRTYVKRSDIEAEEKRKQEEAEEAAAQLERALEQEEAKREEDAAEAQRAGDTAVTGGDEAEQAPSEEAAPAEEAEPSAADAEAVEESGVEVQAAEPEETAADETARAQAEALKEKPKSQQDEAKKREEERERKRAELEAKREREAEERAQRKQEAKPKKKKAEQPAGGRGAGARRGGKKRGGGTAAKQLQQEFERPTAPVVREVEIPETITVAELADRMSVKAAALIKEMMKQGVMATINQAIDQETAAILVEEMGHKPKLQRDDDVEEELLRQGEQPEGEQIGRAPVVTVMGHVDHGKTSLLDYIRRAKVASGEAGGITQHIGAYRVEGENGSATFLDTPGHQAFTAMRARGAQMTDIVVLVVAADDGVMPQTKEAVEHARAAEVPIVVAVNKMDKEDADPNRVKQELSQMEVIPEEWGGDVQFVHVSAMTGEGMDELIEAIVLQAELQELKAVKDCPARGVVLESSLDKGRGPVATVLVQNGYLHRGDTVISGTEFGRVRALVDEHGKRVNEAGPSTPVEVLGLSGLPDAGDDIMVVEDERKAREVAESRSERQREKRLAQQQAARMENLFSQMKEDEVSTINLLVKADVHGSAEALRQSLEDLSHEEVRVRVVSSGVGAITESDVNLALASEAIMIGFNVRADAAAKRMVQEHGVDLHYYSVIYDAIEQVKNAISGMLEPTLEEHILGTAEVREVFRSSKLGQVAGCLVVDGVVRRRNPIRVLRDSVVIYEGELESLRRFKDDVNEVRAGTECGIGVKNYNDVRAGDQIECYERVEVQRSL</sequence>